<feature type="chain" id="PRO_0000348735" description="tRNA-cytidine(32) 2-sulfurtransferase">
    <location>
        <begin position="1"/>
        <end position="267"/>
    </location>
</feature>
<feature type="short sequence motif" description="PP-loop motif" evidence="1">
    <location>
        <begin position="42"/>
        <end position="47"/>
    </location>
</feature>
<feature type="binding site" evidence="1">
    <location>
        <position position="117"/>
    </location>
    <ligand>
        <name>[4Fe-4S] cluster</name>
        <dbReference type="ChEBI" id="CHEBI:49883"/>
    </ligand>
</feature>
<feature type="binding site" evidence="1">
    <location>
        <position position="120"/>
    </location>
    <ligand>
        <name>[4Fe-4S] cluster</name>
        <dbReference type="ChEBI" id="CHEBI:49883"/>
    </ligand>
</feature>
<feature type="binding site" evidence="1">
    <location>
        <position position="208"/>
    </location>
    <ligand>
        <name>[4Fe-4S] cluster</name>
        <dbReference type="ChEBI" id="CHEBI:49883"/>
    </ligand>
</feature>
<proteinExistence type="inferred from homology"/>
<accession>B2SGI4</accession>
<comment type="function">
    <text evidence="1">Catalyzes the ATP-dependent 2-thiolation of cytidine in position 32 of tRNA, to form 2-thiocytidine (s(2)C32). The sulfur atoms are provided by the cysteine/cysteine desulfurase (IscS) system.</text>
</comment>
<comment type="catalytic activity">
    <reaction evidence="1">
        <text>cytidine(32) in tRNA + S-sulfanyl-L-cysteinyl-[cysteine desulfurase] + AH2 + ATP = 2-thiocytidine(32) in tRNA + L-cysteinyl-[cysteine desulfurase] + A + AMP + diphosphate + H(+)</text>
        <dbReference type="Rhea" id="RHEA:57048"/>
        <dbReference type="Rhea" id="RHEA-COMP:10288"/>
        <dbReference type="Rhea" id="RHEA-COMP:12157"/>
        <dbReference type="Rhea" id="RHEA-COMP:12158"/>
        <dbReference type="Rhea" id="RHEA-COMP:14821"/>
        <dbReference type="ChEBI" id="CHEBI:13193"/>
        <dbReference type="ChEBI" id="CHEBI:15378"/>
        <dbReference type="ChEBI" id="CHEBI:17499"/>
        <dbReference type="ChEBI" id="CHEBI:29950"/>
        <dbReference type="ChEBI" id="CHEBI:30616"/>
        <dbReference type="ChEBI" id="CHEBI:33019"/>
        <dbReference type="ChEBI" id="CHEBI:61963"/>
        <dbReference type="ChEBI" id="CHEBI:82748"/>
        <dbReference type="ChEBI" id="CHEBI:141453"/>
        <dbReference type="ChEBI" id="CHEBI:456215"/>
    </reaction>
    <physiologicalReaction direction="left-to-right" evidence="1">
        <dbReference type="Rhea" id="RHEA:57049"/>
    </physiologicalReaction>
</comment>
<comment type="cofactor">
    <cofactor evidence="1">
        <name>Mg(2+)</name>
        <dbReference type="ChEBI" id="CHEBI:18420"/>
    </cofactor>
</comment>
<comment type="cofactor">
    <cofactor evidence="1">
        <name>[4Fe-4S] cluster</name>
        <dbReference type="ChEBI" id="CHEBI:49883"/>
    </cofactor>
    <text evidence="1">Binds 1 [4Fe-4S] cluster per subunit. The cluster is chelated by three Cys residues, the fourth Fe has a free coordination site that may bind a sulfur atom transferred from the persulfide of IscS.</text>
</comment>
<comment type="pathway">
    <text evidence="1">tRNA modification.</text>
</comment>
<comment type="subunit">
    <text evidence="1">Homodimer.</text>
</comment>
<comment type="subcellular location">
    <subcellularLocation>
        <location evidence="1">Cytoplasm</location>
    </subcellularLocation>
</comment>
<comment type="miscellaneous">
    <text evidence="1">The thiolation reaction likely consists of two steps: a first activation step by ATP to form an adenylated intermediate of the target base of tRNA, and a second nucleophilic substitution step of the sulfur (S) atom supplied by the hydrosulfide attached to the Fe-S cluster.</text>
</comment>
<comment type="similarity">
    <text evidence="1">Belongs to the TtcA family.</text>
</comment>
<protein>
    <recommendedName>
        <fullName evidence="1">tRNA-cytidine(32) 2-sulfurtransferase</fullName>
        <ecNumber evidence="1">2.8.1.-</ecNumber>
    </recommendedName>
    <alternativeName>
        <fullName evidence="1">Two-thiocytidine biosynthesis protein A</fullName>
    </alternativeName>
    <alternativeName>
        <fullName evidence="1">tRNA 2-thiocytidine biosynthesis protein TtcA</fullName>
    </alternativeName>
</protein>
<keyword id="KW-0004">4Fe-4S</keyword>
<keyword id="KW-0067">ATP-binding</keyword>
<keyword id="KW-0963">Cytoplasm</keyword>
<keyword id="KW-0408">Iron</keyword>
<keyword id="KW-0411">Iron-sulfur</keyword>
<keyword id="KW-0460">Magnesium</keyword>
<keyword id="KW-0479">Metal-binding</keyword>
<keyword id="KW-0547">Nucleotide-binding</keyword>
<keyword id="KW-0694">RNA-binding</keyword>
<keyword id="KW-0808">Transferase</keyword>
<keyword id="KW-0819">tRNA processing</keyword>
<keyword id="KW-0820">tRNA-binding</keyword>
<organism>
    <name type="scientific">Francisella tularensis subsp. mediasiatica (strain FSC147)</name>
    <dbReference type="NCBI Taxonomy" id="441952"/>
    <lineage>
        <taxon>Bacteria</taxon>
        <taxon>Pseudomonadati</taxon>
        <taxon>Pseudomonadota</taxon>
        <taxon>Gammaproteobacteria</taxon>
        <taxon>Thiotrichales</taxon>
        <taxon>Francisellaceae</taxon>
        <taxon>Francisella</taxon>
    </lineage>
</organism>
<sequence>MTNNTDKQTLKKLERQILRKTAQAINQYNMIEDGDKIMVCLSGGKDSYCLLEMLLLLQKKAPISFEIIAVNLDQKQPGFPEEVLPNYLKNKGVEFHIIERDTYSIVKRVIPEGKTTCGLCSRMRRGILYDFAEENNVTKVALGHHRDDIIETFFLNLFYNGSIKAMPAKLLSDDKRNIVIRPLAFVSEKETLEYSQLKEFPIIPCNLCGSQDNLQRVFIKDMLNRWEQNNPERKNVIFKALSNISPSQMLDKELFDFINISKDDIQR</sequence>
<gene>
    <name evidence="1" type="primary">ttcA</name>
    <name type="ordered locus">FTM_0908</name>
</gene>
<dbReference type="EC" id="2.8.1.-" evidence="1"/>
<dbReference type="EMBL" id="CP000915">
    <property type="protein sequence ID" value="ACD30843.1"/>
    <property type="molecule type" value="Genomic_DNA"/>
</dbReference>
<dbReference type="SMR" id="B2SGI4"/>
<dbReference type="KEGG" id="ftm:FTM_0908"/>
<dbReference type="HOGENOM" id="CLU_026481_0_0_6"/>
<dbReference type="GO" id="GO:0005737">
    <property type="term" value="C:cytoplasm"/>
    <property type="evidence" value="ECO:0007669"/>
    <property type="project" value="UniProtKB-SubCell"/>
</dbReference>
<dbReference type="GO" id="GO:0051539">
    <property type="term" value="F:4 iron, 4 sulfur cluster binding"/>
    <property type="evidence" value="ECO:0007669"/>
    <property type="project" value="UniProtKB-UniRule"/>
</dbReference>
<dbReference type="GO" id="GO:0005524">
    <property type="term" value="F:ATP binding"/>
    <property type="evidence" value="ECO:0007669"/>
    <property type="project" value="UniProtKB-UniRule"/>
</dbReference>
<dbReference type="GO" id="GO:0000287">
    <property type="term" value="F:magnesium ion binding"/>
    <property type="evidence" value="ECO:0007669"/>
    <property type="project" value="UniProtKB-UniRule"/>
</dbReference>
<dbReference type="GO" id="GO:0016783">
    <property type="term" value="F:sulfurtransferase activity"/>
    <property type="evidence" value="ECO:0007669"/>
    <property type="project" value="UniProtKB-UniRule"/>
</dbReference>
<dbReference type="GO" id="GO:0000049">
    <property type="term" value="F:tRNA binding"/>
    <property type="evidence" value="ECO:0007669"/>
    <property type="project" value="UniProtKB-KW"/>
</dbReference>
<dbReference type="GO" id="GO:0034227">
    <property type="term" value="P:tRNA thio-modification"/>
    <property type="evidence" value="ECO:0007669"/>
    <property type="project" value="UniProtKB-UniRule"/>
</dbReference>
<dbReference type="CDD" id="cd24138">
    <property type="entry name" value="TtcA-like"/>
    <property type="match status" value="1"/>
</dbReference>
<dbReference type="Gene3D" id="3.40.50.620">
    <property type="entry name" value="HUPs"/>
    <property type="match status" value="1"/>
</dbReference>
<dbReference type="HAMAP" id="MF_01850">
    <property type="entry name" value="TtcA"/>
    <property type="match status" value="1"/>
</dbReference>
<dbReference type="InterPro" id="IPR014729">
    <property type="entry name" value="Rossmann-like_a/b/a_fold"/>
</dbReference>
<dbReference type="InterPro" id="IPR011063">
    <property type="entry name" value="TilS/TtcA_N"/>
</dbReference>
<dbReference type="InterPro" id="IPR012089">
    <property type="entry name" value="tRNA_Cyd_32_2_STrfase"/>
</dbReference>
<dbReference type="InterPro" id="IPR035107">
    <property type="entry name" value="tRNA_thiolation_TtcA_Ctu1"/>
</dbReference>
<dbReference type="NCBIfam" id="NF007972">
    <property type="entry name" value="PRK10696.1"/>
    <property type="match status" value="1"/>
</dbReference>
<dbReference type="PANTHER" id="PTHR43686:SF1">
    <property type="entry name" value="AMINOTRAN_5 DOMAIN-CONTAINING PROTEIN"/>
    <property type="match status" value="1"/>
</dbReference>
<dbReference type="PANTHER" id="PTHR43686">
    <property type="entry name" value="SULFURTRANSFERASE-RELATED"/>
    <property type="match status" value="1"/>
</dbReference>
<dbReference type="Pfam" id="PF01171">
    <property type="entry name" value="ATP_bind_3"/>
    <property type="match status" value="1"/>
</dbReference>
<dbReference type="PIRSF" id="PIRSF004976">
    <property type="entry name" value="ATPase_YdaO"/>
    <property type="match status" value="1"/>
</dbReference>
<dbReference type="SUPFAM" id="SSF52402">
    <property type="entry name" value="Adenine nucleotide alpha hydrolases-like"/>
    <property type="match status" value="1"/>
</dbReference>
<name>TTCA_FRATM</name>
<reference key="1">
    <citation type="journal article" date="2009" name="PLoS Pathog.">
        <title>Molecular evolutionary consequences of niche restriction in Francisella tularensis, a facultative intracellular pathogen.</title>
        <authorList>
            <person name="Larsson P."/>
            <person name="Elfsmark D."/>
            <person name="Svensson K."/>
            <person name="Wikstroem P."/>
            <person name="Forsman M."/>
            <person name="Brettin T."/>
            <person name="Keim P."/>
            <person name="Johansson A."/>
        </authorList>
    </citation>
    <scope>NUCLEOTIDE SEQUENCE [LARGE SCALE GENOMIC DNA]</scope>
    <source>
        <strain>FSC147</strain>
    </source>
</reference>
<evidence type="ECO:0000255" key="1">
    <source>
        <dbReference type="HAMAP-Rule" id="MF_01850"/>
    </source>
</evidence>